<name>TIPIN_RAT</name>
<organism>
    <name type="scientific">Rattus norvegicus</name>
    <name type="common">Rat</name>
    <dbReference type="NCBI Taxonomy" id="10116"/>
    <lineage>
        <taxon>Eukaryota</taxon>
        <taxon>Metazoa</taxon>
        <taxon>Chordata</taxon>
        <taxon>Craniata</taxon>
        <taxon>Vertebrata</taxon>
        <taxon>Euteleostomi</taxon>
        <taxon>Mammalia</taxon>
        <taxon>Eutheria</taxon>
        <taxon>Euarchontoglires</taxon>
        <taxon>Glires</taxon>
        <taxon>Rodentia</taxon>
        <taxon>Myomorpha</taxon>
        <taxon>Muroidea</taxon>
        <taxon>Muridae</taxon>
        <taxon>Murinae</taxon>
        <taxon>Rattus</taxon>
    </lineage>
</organism>
<protein>
    <recommendedName>
        <fullName>TIMELESS-interacting protein</fullName>
    </recommendedName>
</protein>
<sequence>MLEQEENGLFEIPDYEHVEDETFPPFPPPGSPERDPAEAEPDEGSGAPVPVPPKRIVKRNIPKLDATRLTSERGLPALRHVFDKTKFKGKGHEAEDLKTLIRHMEHWAHRLFPKLQFEDFIDRVENLGNKKEVQTCLKRIRLDLPIVHEDFVNNNDEVEETNSLDAAATGFDAFVTSSSDSKRFASEASRNLTEEQQQRIEKNKQLALERRQAKLLSNSQSLENDVTVEESSTGENQEESNGLISADGPHDVPSASTQEEGQLEAEETQLDHPNLD</sequence>
<dbReference type="EMBL" id="BC097351">
    <property type="protein sequence ID" value="AAH97351.1"/>
    <property type="molecule type" value="mRNA"/>
</dbReference>
<dbReference type="RefSeq" id="NP_001020458.1">
    <property type="nucleotide sequence ID" value="NM_001025287.2"/>
</dbReference>
<dbReference type="SMR" id="Q4QR88"/>
<dbReference type="FunCoup" id="Q4QR88">
    <property type="interactions" value="3036"/>
</dbReference>
<dbReference type="STRING" id="10116.ENSRNOP00000053083"/>
<dbReference type="PhosphoSitePlus" id="Q4QR88"/>
<dbReference type="PaxDb" id="10116-ENSRNOP00000053083"/>
<dbReference type="Ensembl" id="ENSRNOT00000066973.4">
    <property type="protein sequence ID" value="ENSRNOP00000059833.4"/>
    <property type="gene ID" value="ENSRNOG00000043068.4"/>
</dbReference>
<dbReference type="GeneID" id="363076"/>
<dbReference type="KEGG" id="rno:363076"/>
<dbReference type="AGR" id="RGD:1564084"/>
<dbReference type="CTD" id="54962"/>
<dbReference type="RGD" id="1564084">
    <property type="gene designation" value="Tipin"/>
</dbReference>
<dbReference type="eggNOG" id="KOG3004">
    <property type="taxonomic scope" value="Eukaryota"/>
</dbReference>
<dbReference type="GeneTree" id="ENSGT00390000005764"/>
<dbReference type="InParanoid" id="Q4QR88"/>
<dbReference type="OrthoDB" id="85183at9989"/>
<dbReference type="PhylomeDB" id="Q4QR88"/>
<dbReference type="Reactome" id="R-RNO-5693607">
    <property type="pathway name" value="Processing of DNA double-strand break ends"/>
</dbReference>
<dbReference type="PRO" id="PR:Q4QR88"/>
<dbReference type="Proteomes" id="UP000002494">
    <property type="component" value="Chromosome 8"/>
</dbReference>
<dbReference type="GO" id="GO:0000785">
    <property type="term" value="C:chromatin"/>
    <property type="evidence" value="ECO:0000250"/>
    <property type="project" value="UniProtKB"/>
</dbReference>
<dbReference type="GO" id="GO:0005737">
    <property type="term" value="C:cytoplasm"/>
    <property type="evidence" value="ECO:0000266"/>
    <property type="project" value="RGD"/>
</dbReference>
<dbReference type="GO" id="GO:0005634">
    <property type="term" value="C:nucleus"/>
    <property type="evidence" value="ECO:0000250"/>
    <property type="project" value="UniProtKB"/>
</dbReference>
<dbReference type="GO" id="GO:0031298">
    <property type="term" value="C:replication fork protection complex"/>
    <property type="evidence" value="ECO:0000318"/>
    <property type="project" value="GO_Central"/>
</dbReference>
<dbReference type="GO" id="GO:0003677">
    <property type="term" value="F:DNA binding"/>
    <property type="evidence" value="ECO:0000318"/>
    <property type="project" value="GO_Central"/>
</dbReference>
<dbReference type="GO" id="GO:0044770">
    <property type="term" value="P:cell cycle phase transition"/>
    <property type="evidence" value="ECO:0000250"/>
    <property type="project" value="UniProtKB"/>
</dbReference>
<dbReference type="GO" id="GO:0051301">
    <property type="term" value="P:cell division"/>
    <property type="evidence" value="ECO:0007669"/>
    <property type="project" value="UniProtKB-KW"/>
</dbReference>
<dbReference type="GO" id="GO:0000077">
    <property type="term" value="P:DNA damage checkpoint signaling"/>
    <property type="evidence" value="ECO:0000266"/>
    <property type="project" value="RGD"/>
</dbReference>
<dbReference type="GO" id="GO:0000076">
    <property type="term" value="P:DNA replication checkpoint signaling"/>
    <property type="evidence" value="ECO:0000250"/>
    <property type="project" value="UniProtKB"/>
</dbReference>
<dbReference type="GO" id="GO:0031573">
    <property type="term" value="P:mitotic intra-S DNA damage checkpoint signaling"/>
    <property type="evidence" value="ECO:0000250"/>
    <property type="project" value="UniProtKB"/>
</dbReference>
<dbReference type="GO" id="GO:0008284">
    <property type="term" value="P:positive regulation of cell population proliferation"/>
    <property type="evidence" value="ECO:0000250"/>
    <property type="project" value="UniProtKB"/>
</dbReference>
<dbReference type="GO" id="GO:0043111">
    <property type="term" value="P:replication fork arrest"/>
    <property type="evidence" value="ECO:0000318"/>
    <property type="project" value="GO_Central"/>
</dbReference>
<dbReference type="GO" id="GO:0031297">
    <property type="term" value="P:replication fork processing"/>
    <property type="evidence" value="ECO:0007669"/>
    <property type="project" value="InterPro"/>
</dbReference>
<dbReference type="GO" id="GO:0009411">
    <property type="term" value="P:response to UV"/>
    <property type="evidence" value="ECO:0000266"/>
    <property type="project" value="RGD"/>
</dbReference>
<dbReference type="InterPro" id="IPR012923">
    <property type="entry name" value="Csm3"/>
</dbReference>
<dbReference type="InterPro" id="IPR040038">
    <property type="entry name" value="TIPIN/Csm3/Swi3"/>
</dbReference>
<dbReference type="PANTHER" id="PTHR13220">
    <property type="entry name" value="TIMELESS INTERACTING-RELATED"/>
    <property type="match status" value="1"/>
</dbReference>
<dbReference type="PANTHER" id="PTHR13220:SF11">
    <property type="entry name" value="TIMELESS-INTERACTING PROTEIN"/>
    <property type="match status" value="1"/>
</dbReference>
<dbReference type="Pfam" id="PF07962">
    <property type="entry name" value="Swi3"/>
    <property type="match status" value="1"/>
</dbReference>
<feature type="chain" id="PRO_0000305255" description="TIMELESS-interacting protein">
    <location>
        <begin position="1"/>
        <end position="276"/>
    </location>
</feature>
<feature type="region of interest" description="Disordered" evidence="2">
    <location>
        <begin position="1"/>
        <end position="54"/>
    </location>
</feature>
<feature type="region of interest" description="Interaction with TIMELESS" evidence="1">
    <location>
        <begin position="64"/>
        <end position="140"/>
    </location>
</feature>
<feature type="region of interest" description="Disordered" evidence="2">
    <location>
        <begin position="217"/>
        <end position="276"/>
    </location>
</feature>
<feature type="compositionally biased region" description="Polar residues" evidence="2">
    <location>
        <begin position="217"/>
        <end position="243"/>
    </location>
</feature>
<feature type="modified residue" description="Phosphoserine" evidence="1">
    <location>
        <position position="219"/>
    </location>
</feature>
<feature type="modified residue" description="Phosphothreonine" evidence="1">
    <location>
        <position position="233"/>
    </location>
</feature>
<reference key="1">
    <citation type="journal article" date="2004" name="Genome Res.">
        <title>The status, quality, and expansion of the NIH full-length cDNA project: the Mammalian Gene Collection (MGC).</title>
        <authorList>
            <consortium name="The MGC Project Team"/>
        </authorList>
    </citation>
    <scope>NUCLEOTIDE SEQUENCE [LARGE SCALE MRNA]</scope>
    <source>
        <tissue>Thymus</tissue>
    </source>
</reference>
<accession>Q4QR88</accession>
<gene>
    <name type="primary">Tipin</name>
</gene>
<comment type="function">
    <text evidence="1">Plays an important role in the control of DNA replication and the maintenance of replication fork stability. Important for cell survival after DNA damage or replication stress. May be specifically required for the ATR-CHEK1 pathway in the replication checkpoint induced by hydroxyurea or ultraviolet light. Forms a complex with TIMELESS and this complex regulates DNA replication processes under both normal and stress conditions, stabilizes replication forks and influences both CHEK1 phosphorylation and the intra-S phase checkpoint in response to genotoxic stress.</text>
</comment>
<comment type="subunit">
    <text evidence="1">Interacts with TIMELESS, which impairs TIMELESS self-association (via N-terminus). Associates with the MCM2-7 complex. Interacts with RPA2, PRDX2.</text>
</comment>
<comment type="subcellular location">
    <subcellularLocation>
        <location evidence="1">Cytoplasm</location>
    </subcellularLocation>
    <subcellularLocation>
        <location evidence="1">Nucleus</location>
    </subcellularLocation>
</comment>
<comment type="similarity">
    <text evidence="3">Belongs to the CSM3 family.</text>
</comment>
<keyword id="KW-0131">Cell cycle</keyword>
<keyword id="KW-0132">Cell division</keyword>
<keyword id="KW-0963">Cytoplasm</keyword>
<keyword id="KW-0227">DNA damage</keyword>
<keyword id="KW-0498">Mitosis</keyword>
<keyword id="KW-0539">Nucleus</keyword>
<keyword id="KW-0597">Phosphoprotein</keyword>
<keyword id="KW-1185">Reference proteome</keyword>
<proteinExistence type="evidence at transcript level"/>
<evidence type="ECO:0000250" key="1">
    <source>
        <dbReference type="UniProtKB" id="Q9BVW5"/>
    </source>
</evidence>
<evidence type="ECO:0000256" key="2">
    <source>
        <dbReference type="SAM" id="MobiDB-lite"/>
    </source>
</evidence>
<evidence type="ECO:0000305" key="3"/>